<comment type="function">
    <text evidence="1">Is able to transfer iron-sulfur clusters to apo-ferredoxin. Multiple cycles of [2Fe2S] cluster formation and transfer are observed, suggesting that IscA acts catalytically. Recruits intracellular free iron so as to provide iron for the assembly of transient iron-sulfur cluster in IscU in the presence of IscS, L-cysteine and the thioredoxin reductase system TrxA/TrxB.</text>
</comment>
<comment type="cofactor">
    <cofactor evidence="1">
        <name>Fe cation</name>
        <dbReference type="ChEBI" id="CHEBI:24875"/>
    </cofactor>
    <text evidence="1">Binds 2 iron ions per dimer. The dimer may bind additional iron ions.</text>
</comment>
<comment type="subunit">
    <text evidence="1">Homodimer; may form tetramers and higher multimers.</text>
</comment>
<comment type="similarity">
    <text evidence="1">Belongs to the HesB/IscA family.</text>
</comment>
<sequence length="107" mass="11504">MSITLSDSAAARVNTFLANRGKGFGLRLGVRTSGCSGMAYVLEFVDEPTAEDTVFEDKGVKVVVDGKSLQFLDGTQLDFVKEGLNEGFKFSNPNVKDECGCGESFHV</sequence>
<protein>
    <recommendedName>
        <fullName evidence="1">Iron-binding protein IscA</fullName>
    </recommendedName>
    <alternativeName>
        <fullName evidence="1">Iron-sulfur cluster assembly protein</fullName>
    </alternativeName>
</protein>
<organism>
    <name type="scientific">Salmonella typhi</name>
    <dbReference type="NCBI Taxonomy" id="90370"/>
    <lineage>
        <taxon>Bacteria</taxon>
        <taxon>Pseudomonadati</taxon>
        <taxon>Pseudomonadota</taxon>
        <taxon>Gammaproteobacteria</taxon>
        <taxon>Enterobacterales</taxon>
        <taxon>Enterobacteriaceae</taxon>
        <taxon>Salmonella</taxon>
    </lineage>
</organism>
<gene>
    <name evidence="1" type="primary">iscA</name>
    <name type="ordered locus">STY2787</name>
    <name type="ordered locus">t0315</name>
</gene>
<evidence type="ECO:0000255" key="1">
    <source>
        <dbReference type="HAMAP-Rule" id="MF_01429"/>
    </source>
</evidence>
<name>ISCA_SALTI</name>
<reference key="1">
    <citation type="journal article" date="2003" name="J. Bacteriol.">
        <title>Comparative genomics of Salmonella enterica serovar Typhi strains Ty2 and CT18.</title>
        <authorList>
            <person name="Deng W."/>
            <person name="Liou S.-R."/>
            <person name="Plunkett G. III"/>
            <person name="Mayhew G.F."/>
            <person name="Rose D.J."/>
            <person name="Burland V."/>
            <person name="Kodoyianni V."/>
            <person name="Schwartz D.C."/>
            <person name="Blattner F.R."/>
        </authorList>
    </citation>
    <scope>NUCLEOTIDE SEQUENCE [LARGE SCALE GENOMIC DNA]</scope>
    <source>
        <strain>ATCC 700931 / Ty2</strain>
    </source>
</reference>
<reference key="2">
    <citation type="journal article" date="2001" name="Nature">
        <title>Complete genome sequence of a multiple drug resistant Salmonella enterica serovar Typhi CT18.</title>
        <authorList>
            <person name="Parkhill J."/>
            <person name="Dougan G."/>
            <person name="James K.D."/>
            <person name="Thomson N.R."/>
            <person name="Pickard D."/>
            <person name="Wain J."/>
            <person name="Churcher C.M."/>
            <person name="Mungall K.L."/>
            <person name="Bentley S.D."/>
            <person name="Holden M.T.G."/>
            <person name="Sebaihia M."/>
            <person name="Baker S."/>
            <person name="Basham D."/>
            <person name="Brooks K."/>
            <person name="Chillingworth T."/>
            <person name="Connerton P."/>
            <person name="Cronin A."/>
            <person name="Davis P."/>
            <person name="Davies R.M."/>
            <person name="Dowd L."/>
            <person name="White N."/>
            <person name="Farrar J."/>
            <person name="Feltwell T."/>
            <person name="Hamlin N."/>
            <person name="Haque A."/>
            <person name="Hien T.T."/>
            <person name="Holroyd S."/>
            <person name="Jagels K."/>
            <person name="Krogh A."/>
            <person name="Larsen T.S."/>
            <person name="Leather S."/>
            <person name="Moule S."/>
            <person name="O'Gaora P."/>
            <person name="Parry C."/>
            <person name="Quail M.A."/>
            <person name="Rutherford K.M."/>
            <person name="Simmonds M."/>
            <person name="Skelton J."/>
            <person name="Stevens K."/>
            <person name="Whitehead S."/>
            <person name="Barrell B.G."/>
        </authorList>
    </citation>
    <scope>NUCLEOTIDE SEQUENCE [LARGE SCALE GENOMIC DNA]</scope>
    <source>
        <strain>CT18</strain>
    </source>
</reference>
<proteinExistence type="inferred from homology"/>
<dbReference type="EMBL" id="AE014613">
    <property type="protein sequence ID" value="AAO68039.1"/>
    <property type="molecule type" value="Genomic_DNA"/>
</dbReference>
<dbReference type="EMBL" id="AL513382">
    <property type="protein sequence ID" value="CAD02744.1"/>
    <property type="molecule type" value="Genomic_DNA"/>
</dbReference>
<dbReference type="RefSeq" id="NP_457072.1">
    <property type="nucleotide sequence ID" value="NC_003198.1"/>
</dbReference>
<dbReference type="RefSeq" id="WP_000028952.1">
    <property type="nucleotide sequence ID" value="NZ_WSUR01000007.1"/>
</dbReference>
<dbReference type="SMR" id="Q8XFZ8"/>
<dbReference type="STRING" id="220341.gene:17586678"/>
<dbReference type="GeneID" id="66756972"/>
<dbReference type="KEGG" id="stt:t0315"/>
<dbReference type="KEGG" id="sty:STY2787"/>
<dbReference type="PATRIC" id="fig|220341.7.peg.2832"/>
<dbReference type="eggNOG" id="COG0316">
    <property type="taxonomic scope" value="Bacteria"/>
</dbReference>
<dbReference type="HOGENOM" id="CLU_069054_5_1_6"/>
<dbReference type="OMA" id="GCAGQEY"/>
<dbReference type="OrthoDB" id="9801228at2"/>
<dbReference type="Proteomes" id="UP000000541">
    <property type="component" value="Chromosome"/>
</dbReference>
<dbReference type="Proteomes" id="UP000002670">
    <property type="component" value="Chromosome"/>
</dbReference>
<dbReference type="GO" id="GO:0005829">
    <property type="term" value="C:cytosol"/>
    <property type="evidence" value="ECO:0007669"/>
    <property type="project" value="TreeGrafter"/>
</dbReference>
<dbReference type="GO" id="GO:0051537">
    <property type="term" value="F:2 iron, 2 sulfur cluster binding"/>
    <property type="evidence" value="ECO:0007669"/>
    <property type="project" value="TreeGrafter"/>
</dbReference>
<dbReference type="GO" id="GO:0005506">
    <property type="term" value="F:iron ion binding"/>
    <property type="evidence" value="ECO:0007669"/>
    <property type="project" value="UniProtKB-UniRule"/>
</dbReference>
<dbReference type="GO" id="GO:0016226">
    <property type="term" value="P:iron-sulfur cluster assembly"/>
    <property type="evidence" value="ECO:0007669"/>
    <property type="project" value="UniProtKB-UniRule"/>
</dbReference>
<dbReference type="FunFam" id="2.60.300.12:FF:000001">
    <property type="entry name" value="Iron-binding protein IscA"/>
    <property type="match status" value="1"/>
</dbReference>
<dbReference type="Gene3D" id="2.60.300.12">
    <property type="entry name" value="HesB-like domain"/>
    <property type="match status" value="1"/>
</dbReference>
<dbReference type="HAMAP" id="MF_01429">
    <property type="entry name" value="Fe_S_insert_IscA"/>
    <property type="match status" value="1"/>
</dbReference>
<dbReference type="InterPro" id="IPR050322">
    <property type="entry name" value="Fe-S_cluster_asmbl/transfer"/>
</dbReference>
<dbReference type="InterPro" id="IPR000361">
    <property type="entry name" value="FeS_biogenesis"/>
</dbReference>
<dbReference type="InterPro" id="IPR016092">
    <property type="entry name" value="FeS_cluster_insertion"/>
</dbReference>
<dbReference type="InterPro" id="IPR017870">
    <property type="entry name" value="FeS_cluster_insertion_CS"/>
</dbReference>
<dbReference type="InterPro" id="IPR035903">
    <property type="entry name" value="HesB-like_dom_sf"/>
</dbReference>
<dbReference type="InterPro" id="IPR011302">
    <property type="entry name" value="IscA_proteobacteria"/>
</dbReference>
<dbReference type="NCBIfam" id="TIGR00049">
    <property type="entry name" value="iron-sulfur cluster assembly accessory protein"/>
    <property type="match status" value="1"/>
</dbReference>
<dbReference type="NCBIfam" id="TIGR02011">
    <property type="entry name" value="IscA"/>
    <property type="match status" value="1"/>
</dbReference>
<dbReference type="NCBIfam" id="NF007049">
    <property type="entry name" value="PRK09502.1"/>
    <property type="match status" value="1"/>
</dbReference>
<dbReference type="PANTHER" id="PTHR10072:SF41">
    <property type="entry name" value="IRON-SULFUR CLUSTER ASSEMBLY 1 HOMOLOG, MITOCHONDRIAL"/>
    <property type="match status" value="1"/>
</dbReference>
<dbReference type="PANTHER" id="PTHR10072">
    <property type="entry name" value="IRON-SULFUR CLUSTER ASSEMBLY PROTEIN"/>
    <property type="match status" value="1"/>
</dbReference>
<dbReference type="Pfam" id="PF01521">
    <property type="entry name" value="Fe-S_biosyn"/>
    <property type="match status" value="1"/>
</dbReference>
<dbReference type="SUPFAM" id="SSF89360">
    <property type="entry name" value="HesB-like domain"/>
    <property type="match status" value="1"/>
</dbReference>
<dbReference type="PROSITE" id="PS01152">
    <property type="entry name" value="HESB"/>
    <property type="match status" value="1"/>
</dbReference>
<feature type="chain" id="PRO_0000077003" description="Iron-binding protein IscA">
    <location>
        <begin position="1"/>
        <end position="107"/>
    </location>
</feature>
<feature type="binding site" evidence="1">
    <location>
        <position position="35"/>
    </location>
    <ligand>
        <name>Fe cation</name>
        <dbReference type="ChEBI" id="CHEBI:24875"/>
    </ligand>
</feature>
<feature type="binding site" evidence="1">
    <location>
        <position position="99"/>
    </location>
    <ligand>
        <name>Fe cation</name>
        <dbReference type="ChEBI" id="CHEBI:24875"/>
    </ligand>
</feature>
<feature type="binding site" evidence="1">
    <location>
        <position position="101"/>
    </location>
    <ligand>
        <name>Fe cation</name>
        <dbReference type="ChEBI" id="CHEBI:24875"/>
    </ligand>
</feature>
<accession>Q8XFZ8</accession>
<accession>Q7AMI4</accession>
<keyword id="KW-0408">Iron</keyword>
<keyword id="KW-0479">Metal-binding</keyword>